<reference key="1">
    <citation type="journal article" date="1996" name="DNA Res.">
        <title>A 460-kb DNA sequence of the Escherichia coli K-12 genome corresponding to the 40.1-50.0 min region on the linkage map.</title>
        <authorList>
            <person name="Itoh T."/>
            <person name="Aiba H."/>
            <person name="Baba T."/>
            <person name="Fujita K."/>
            <person name="Hayashi K."/>
            <person name="Inada T."/>
            <person name="Isono K."/>
            <person name="Kasai H."/>
            <person name="Kimura S."/>
            <person name="Kitakawa M."/>
            <person name="Kitagawa M."/>
            <person name="Makino K."/>
            <person name="Miki T."/>
            <person name="Mizobuchi K."/>
            <person name="Mori H."/>
            <person name="Mori T."/>
            <person name="Motomura K."/>
            <person name="Nakade S."/>
            <person name="Nakamura Y."/>
            <person name="Nashimoto H."/>
            <person name="Nishio Y."/>
            <person name="Oshima T."/>
            <person name="Saito N."/>
            <person name="Sampei G."/>
            <person name="Seki Y."/>
            <person name="Sivasundaram S."/>
            <person name="Tagami H."/>
            <person name="Takeda J."/>
            <person name="Takemoto K."/>
            <person name="Wada C."/>
            <person name="Yamamoto Y."/>
            <person name="Horiuchi T."/>
        </authorList>
    </citation>
    <scope>NUCLEOTIDE SEQUENCE [LARGE SCALE GENOMIC DNA]</scope>
    <source>
        <strain>K12 / W3110 / ATCC 27325 / DSM 5911</strain>
    </source>
</reference>
<reference key="2">
    <citation type="journal article" date="1997" name="Science">
        <title>The complete genome sequence of Escherichia coli K-12.</title>
        <authorList>
            <person name="Blattner F.R."/>
            <person name="Plunkett G. III"/>
            <person name="Bloch C.A."/>
            <person name="Perna N.T."/>
            <person name="Burland V."/>
            <person name="Riley M."/>
            <person name="Collado-Vides J."/>
            <person name="Glasner J.D."/>
            <person name="Rode C.K."/>
            <person name="Mayhew G.F."/>
            <person name="Gregor J."/>
            <person name="Davis N.W."/>
            <person name="Kirkpatrick H.A."/>
            <person name="Goeden M.A."/>
            <person name="Rose D.J."/>
            <person name="Mau B."/>
            <person name="Shao Y."/>
        </authorList>
    </citation>
    <scope>NUCLEOTIDE SEQUENCE [LARGE SCALE GENOMIC DNA]</scope>
    <source>
        <strain>K12 / MG1655 / ATCC 47076</strain>
    </source>
</reference>
<reference key="3">
    <citation type="journal article" date="2006" name="Mol. Syst. Biol.">
        <title>Highly accurate genome sequences of Escherichia coli K-12 strains MG1655 and W3110.</title>
        <authorList>
            <person name="Hayashi K."/>
            <person name="Morooka N."/>
            <person name="Yamamoto Y."/>
            <person name="Fujita K."/>
            <person name="Isono K."/>
            <person name="Choi S."/>
            <person name="Ohtsubo E."/>
            <person name="Baba T."/>
            <person name="Wanner B.L."/>
            <person name="Mori H."/>
            <person name="Horiuchi T."/>
        </authorList>
    </citation>
    <scope>NUCLEOTIDE SEQUENCE [LARGE SCALE GENOMIC DNA]</scope>
    <source>
        <strain>K12 / W3110 / ATCC 27325 / DSM 5911</strain>
    </source>
</reference>
<reference key="4">
    <citation type="journal article" date="2005" name="Science">
        <title>Global topology analysis of the Escherichia coli inner membrane proteome.</title>
        <authorList>
            <person name="Daley D.O."/>
            <person name="Rapp M."/>
            <person name="Granseth E."/>
            <person name="Melen K."/>
            <person name="Drew D."/>
            <person name="von Heijne G."/>
        </authorList>
    </citation>
    <scope>TOPOLOGY [LARGE SCALE ANALYSIS]</scope>
    <scope>SUBCELLULAR LOCATION</scope>
    <source>
        <strain>K12 / MG1655 / ATCC 47076</strain>
    </source>
</reference>
<reference key="5">
    <citation type="journal article" date="2010" name="J. Biol. Chem.">
        <title>The L-cysteine/L-cystine shuttle system provides reducing equivalents to the periplasm in Escherichia coli.</title>
        <authorList>
            <person name="Ohtsu I."/>
            <person name="Wiriyathanawudhiwong N."/>
            <person name="Morigasaki S."/>
            <person name="Nakatani T."/>
            <person name="Kadokura H."/>
            <person name="Takagi H."/>
        </authorList>
    </citation>
    <scope>FUNCTION</scope>
</reference>
<reference key="6">
    <citation type="journal article" date="2014" name="J. Appl. Microbiol.">
        <title>Susceptibility of Escherichia coli to the toxic L-proline analogue L-selenaproline is dependent on two L-cystine transport systems.</title>
        <authorList>
            <person name="Deutch C.E."/>
            <person name="Spahija I."/>
            <person name="Wagner C.E."/>
        </authorList>
    </citation>
    <scope>FUNCTION</scope>
    <scope>ACTIVITY REGULATION</scope>
    <scope>DISRUPTION PHENOTYPE</scope>
    <source>
        <strain>K12</strain>
    </source>
</reference>
<reference key="7">
    <citation type="journal article" date="2015" name="PLoS ONE">
        <title>Uptake of L-cystine via an ABC transporter contributes defense of oxidative stress in the L-cystine export-dependent manner in Escherichia coli.</title>
        <authorList>
            <person name="Ohtsu I."/>
            <person name="Kawano Y."/>
            <person name="Suzuki M."/>
            <person name="Morigasaki S."/>
            <person name="Saiki K."/>
            <person name="Yamazaki S."/>
            <person name="Nonaka G."/>
            <person name="Takagi H."/>
        </authorList>
    </citation>
    <scope>FUNCTION</scope>
    <scope>SUBUNIT</scope>
    <scope>INDUCTION</scope>
    <scope>DISRUPTION PHENOTYPE</scope>
</reference>
<reference key="8">
    <citation type="journal article" date="2015" name="J. Bacteriol.">
        <title>Physiological roles and adverse effects of the two cystine importers of Escherichia coli.</title>
        <authorList>
            <person name="Chonoles Imlay K.R."/>
            <person name="Korshunov S."/>
            <person name="Imlay J.A."/>
        </authorList>
    </citation>
    <scope>FUNCTION</scope>
    <scope>SUBUNIT</scope>
</reference>
<evidence type="ECO:0000255" key="1"/>
<evidence type="ECO:0000255" key="2">
    <source>
        <dbReference type="PROSITE-ProRule" id="PRU00441"/>
    </source>
</evidence>
<evidence type="ECO:0000269" key="3">
    <source>
    </source>
</evidence>
<evidence type="ECO:0000269" key="4">
    <source>
    </source>
</evidence>
<evidence type="ECO:0000269" key="5">
    <source>
    </source>
</evidence>
<evidence type="ECO:0000269" key="6">
    <source>
    </source>
</evidence>
<evidence type="ECO:0000269" key="7">
    <source>
    </source>
</evidence>
<evidence type="ECO:0000303" key="8">
    <source>
    </source>
</evidence>
<evidence type="ECO:0000305" key="9"/>
<evidence type="ECO:0000305" key="10">
    <source>
    </source>
</evidence>
<evidence type="ECO:0000305" key="11">
    <source>
    </source>
</evidence>
<accession>P0AFT2</accession>
<accession>O07985</accession>
<accession>P76315</accession>
<protein>
    <recommendedName>
        <fullName evidence="9">L-cystine transport system permease protein TcyL</fullName>
    </recommendedName>
</protein>
<sequence length="222" mass="24801">MQESIQLVIDSLPFLLKGAGYTLQLSIGGMFFGLLLGFILALMRLSPIWPVRWLARFYISIFRGTPLIAQLFMIYYGLPQFGIELDPIPSAMIGLSLNTAAYAAETLRAAISSIDKGQWEAAASIGMTPWQTMRRAILPQAARVALPPLSNSFISLVKDTSLAATIQVPELFRQAQLITSRTLEVFTMYLAASLIYWIMATVLSTLQNHFENQLNRQEREPK</sequence>
<dbReference type="EMBL" id="U00096">
    <property type="protein sequence ID" value="AAC74985.1"/>
    <property type="molecule type" value="Genomic_DNA"/>
</dbReference>
<dbReference type="EMBL" id="AP009048">
    <property type="protein sequence ID" value="BAA15738.1"/>
    <property type="molecule type" value="Genomic_DNA"/>
</dbReference>
<dbReference type="PIR" id="C64955">
    <property type="entry name" value="C64955"/>
</dbReference>
<dbReference type="RefSeq" id="NP_416428.1">
    <property type="nucleotide sequence ID" value="NC_000913.3"/>
</dbReference>
<dbReference type="RefSeq" id="WP_001158220.1">
    <property type="nucleotide sequence ID" value="NZ_STEB01000026.1"/>
</dbReference>
<dbReference type="SMR" id="P0AFT2"/>
<dbReference type="BioGRID" id="4261651">
    <property type="interactions" value="25"/>
</dbReference>
<dbReference type="ComplexPortal" id="CPX-4406">
    <property type="entry name" value="L-cystine ABC transporter complex"/>
</dbReference>
<dbReference type="FunCoup" id="P0AFT2">
    <property type="interactions" value="373"/>
</dbReference>
<dbReference type="IntAct" id="P0AFT2">
    <property type="interactions" value="1"/>
</dbReference>
<dbReference type="STRING" id="511145.b1918"/>
<dbReference type="TCDB" id="3.A.1.3.10">
    <property type="family name" value="the atp-binding cassette (abc) superfamily"/>
</dbReference>
<dbReference type="jPOST" id="P0AFT2"/>
<dbReference type="PaxDb" id="511145-b1918"/>
<dbReference type="EnsemblBacteria" id="AAC74985">
    <property type="protein sequence ID" value="AAC74985"/>
    <property type="gene ID" value="b1918"/>
</dbReference>
<dbReference type="GeneID" id="93776224"/>
<dbReference type="GeneID" id="949105"/>
<dbReference type="KEGG" id="ecj:JW1903"/>
<dbReference type="KEGG" id="eco:b1918"/>
<dbReference type="KEGG" id="ecoc:C3026_10885"/>
<dbReference type="PATRIC" id="fig|1411691.4.peg.331"/>
<dbReference type="EchoBASE" id="EB3791"/>
<dbReference type="eggNOG" id="COG0765">
    <property type="taxonomic scope" value="Bacteria"/>
</dbReference>
<dbReference type="HOGENOM" id="CLU_019602_1_4_6"/>
<dbReference type="InParanoid" id="P0AFT2"/>
<dbReference type="OMA" id="FEIFTMY"/>
<dbReference type="OrthoDB" id="9787841at2"/>
<dbReference type="PhylomeDB" id="P0AFT2"/>
<dbReference type="BioCyc" id="EcoCyc:G7037-MONOMER"/>
<dbReference type="BioCyc" id="MetaCyc:G7037-MONOMER"/>
<dbReference type="PRO" id="PR:P0AFT2"/>
<dbReference type="Proteomes" id="UP000000625">
    <property type="component" value="Chromosome"/>
</dbReference>
<dbReference type="GO" id="GO:0055052">
    <property type="term" value="C:ATP-binding cassette (ABC) transporter complex, substrate-binding subunit-containing"/>
    <property type="evidence" value="ECO:0000303"/>
    <property type="project" value="ComplexPortal"/>
</dbReference>
<dbReference type="GO" id="GO:0005886">
    <property type="term" value="C:plasma membrane"/>
    <property type="evidence" value="ECO:0000314"/>
    <property type="project" value="EcoCyc"/>
</dbReference>
<dbReference type="GO" id="GO:0015184">
    <property type="term" value="F:L-cystine transmembrane transporter activity"/>
    <property type="evidence" value="ECO:0000314"/>
    <property type="project" value="EcoCyc"/>
</dbReference>
<dbReference type="GO" id="GO:1903712">
    <property type="term" value="P:cysteine transmembrane transport"/>
    <property type="evidence" value="ECO:0000303"/>
    <property type="project" value="ComplexPortal"/>
</dbReference>
<dbReference type="GO" id="GO:0015830">
    <property type="term" value="P:diaminopimelate transport"/>
    <property type="evidence" value="ECO:0000316"/>
    <property type="project" value="EcoCyc"/>
</dbReference>
<dbReference type="GO" id="GO:0015811">
    <property type="term" value="P:L-cystine transport"/>
    <property type="evidence" value="ECO:0000314"/>
    <property type="project" value="EcoCyc"/>
</dbReference>
<dbReference type="GO" id="GO:0006791">
    <property type="term" value="P:sulfur utilization"/>
    <property type="evidence" value="ECO:0000270"/>
    <property type="project" value="EcoCyc"/>
</dbReference>
<dbReference type="CDD" id="cd06261">
    <property type="entry name" value="TM_PBP2"/>
    <property type="match status" value="1"/>
</dbReference>
<dbReference type="FunFam" id="1.10.3720.10:FF:000009">
    <property type="entry name" value="Amino acid ABC transporter permease"/>
    <property type="match status" value="1"/>
</dbReference>
<dbReference type="Gene3D" id="1.10.3720.10">
    <property type="entry name" value="MetI-like"/>
    <property type="match status" value="1"/>
</dbReference>
<dbReference type="InterPro" id="IPR010065">
    <property type="entry name" value="AA_ABC_transptr_permease_3TM"/>
</dbReference>
<dbReference type="InterPro" id="IPR043429">
    <property type="entry name" value="ArtM/GltK/GlnP/TcyL/YhdX-like"/>
</dbReference>
<dbReference type="InterPro" id="IPR000515">
    <property type="entry name" value="MetI-like"/>
</dbReference>
<dbReference type="InterPro" id="IPR035906">
    <property type="entry name" value="MetI-like_sf"/>
</dbReference>
<dbReference type="NCBIfam" id="TIGR01726">
    <property type="entry name" value="HEQRo_perm_3TM"/>
    <property type="match status" value="1"/>
</dbReference>
<dbReference type="NCBIfam" id="NF011680">
    <property type="entry name" value="PRK15100.1"/>
    <property type="match status" value="1"/>
</dbReference>
<dbReference type="PANTHER" id="PTHR30614:SF0">
    <property type="entry name" value="L-CYSTINE TRANSPORT SYSTEM PERMEASE PROTEIN TCYL"/>
    <property type="match status" value="1"/>
</dbReference>
<dbReference type="PANTHER" id="PTHR30614">
    <property type="entry name" value="MEMBRANE COMPONENT OF AMINO ACID ABC TRANSPORTER"/>
    <property type="match status" value="1"/>
</dbReference>
<dbReference type="Pfam" id="PF00528">
    <property type="entry name" value="BPD_transp_1"/>
    <property type="match status" value="1"/>
</dbReference>
<dbReference type="SUPFAM" id="SSF161098">
    <property type="entry name" value="MetI-like"/>
    <property type="match status" value="1"/>
</dbReference>
<dbReference type="PROSITE" id="PS50928">
    <property type="entry name" value="ABC_TM1"/>
    <property type="match status" value="1"/>
</dbReference>
<organism>
    <name type="scientific">Escherichia coli (strain K12)</name>
    <dbReference type="NCBI Taxonomy" id="83333"/>
    <lineage>
        <taxon>Bacteria</taxon>
        <taxon>Pseudomonadati</taxon>
        <taxon>Pseudomonadota</taxon>
        <taxon>Gammaproteobacteria</taxon>
        <taxon>Enterobacterales</taxon>
        <taxon>Enterobacteriaceae</taxon>
        <taxon>Escherichia</taxon>
    </lineage>
</organism>
<feature type="chain" id="PRO_0000060250" description="L-cystine transport system permease protein TcyL">
    <location>
        <begin position="1"/>
        <end position="222"/>
    </location>
</feature>
<feature type="topological domain" description="Periplasmic" evidence="9">
    <location>
        <begin position="1"/>
        <end position="22"/>
    </location>
</feature>
<feature type="transmembrane region" description="Helical" evidence="1">
    <location>
        <begin position="23"/>
        <end position="43"/>
    </location>
</feature>
<feature type="topological domain" description="Cytoplasmic" evidence="9">
    <location>
        <begin position="44"/>
        <end position="64"/>
    </location>
</feature>
<feature type="transmembrane region" description="Helical" evidence="1">
    <location>
        <begin position="65"/>
        <end position="85"/>
    </location>
</feature>
<feature type="topological domain" description="Periplasmic" evidence="9">
    <location>
        <begin position="86"/>
        <end position="182"/>
    </location>
</feature>
<feature type="transmembrane region" description="Helical" evidence="1">
    <location>
        <begin position="183"/>
        <end position="203"/>
    </location>
</feature>
<feature type="topological domain" description="Cytoplasmic" evidence="3">
    <location>
        <begin position="204"/>
        <end position="222"/>
    </location>
</feature>
<feature type="domain" description="ABC transmembrane type-1" evidence="2">
    <location>
        <begin position="19"/>
        <end position="207"/>
    </location>
</feature>
<keyword id="KW-0029">Amino-acid transport</keyword>
<keyword id="KW-0997">Cell inner membrane</keyword>
<keyword id="KW-1003">Cell membrane</keyword>
<keyword id="KW-0472">Membrane</keyword>
<keyword id="KW-1185">Reference proteome</keyword>
<keyword id="KW-0812">Transmembrane</keyword>
<keyword id="KW-1133">Transmembrane helix</keyword>
<keyword id="KW-0813">Transport</keyword>
<gene>
    <name evidence="8" type="primary">tcyL</name>
    <name type="synonym">yecS</name>
    <name type="ordered locus">b1918</name>
    <name type="ordered locus">JW1903</name>
</gene>
<name>TCYL_ECOLI</name>
<proteinExistence type="evidence at protein level"/>
<comment type="function">
    <text evidence="4 5 6 7 9">Part of the ABC transporter complex TcyJLN involved in L-cystine import (PubMed:20351115, PubMed:25139244, PubMed:25837721, PubMed:26350134). This high affinity cystine transporter is involved in resistance to oxidative stress by forming a L-cysteine/L-cystine shuttle system with the EamA transporter, which exports L-cysteine as reducing equivalents to the periplasm to prevent the cells from oxidative stress. Exported L-cysteine can reduce the periplasmic hydrogen peroxide to water, and then generated L-cystine is imported back into the cytoplasm via the TcyJLN complex (PubMed:20351115, PubMed:25837721). Functions at low cystine concentrations (PubMed:26350134). The system can also transport L-cysteine, diaminopimelic acid (DAP), djenkolate, lanthionine, D-cystine, homocystine, and it mediates accumulation of the toxic compounds L-selenaproline (SCA) and L-selenocystine (SeCys) (PubMed:25139244, PubMed:26350134). Responsible for the translocation of the substrate across the membrane (Probable).</text>
</comment>
<comment type="activity regulation">
    <text evidence="5">The TcyJLN system is inhibited by L-cystine, L-cysteine, DL-2,6-diaminopimelic acid and L-cystathionine, and is stimulated by D-cysteine.</text>
</comment>
<comment type="subunit">
    <text evidence="10 11">The complex is composed of two ATP-binding proteins (TcyN), two transmembrane proteins (TcyL) and a solute-binding protein (TcyJ).</text>
</comment>
<comment type="subcellular location">
    <subcellularLocation>
        <location evidence="3">Cell inner membrane</location>
        <topology evidence="1">Multi-pass membrane protein</topology>
    </subcellularLocation>
</comment>
<comment type="induction">
    <text evidence="6">Expression is induced by H(2)O(2).</text>
</comment>
<comment type="disruption phenotype">
    <text evidence="5 6">Disruption of the gene decreases uptake of cystine (PubMed:25837721). The tcyL-tcyP double mutant cannot grow in the minimal medium containing L-cystine as a sole sulfur source is completely resistant to both L-selenaproline and L-selenocystine (PubMed:25139244, PubMed:25837721).</text>
</comment>
<comment type="similarity">
    <text evidence="9">Belongs to the binding-protein-dependent transport system permease family. HisMQ subfamily.</text>
</comment>